<keyword id="KW-0031">Aminopeptidase</keyword>
<keyword id="KW-0963">Cytoplasm</keyword>
<keyword id="KW-0378">Hydrolase</keyword>
<keyword id="KW-0464">Manganese</keyword>
<keyword id="KW-0479">Metal-binding</keyword>
<keyword id="KW-0645">Protease</keyword>
<name>AMPA_BACCZ</name>
<sequence length="494" mass="53514">MFQVQKELASHEAVVVALFEEEKTSSFVQELDKAFEGQLQVLLEEKELSTKKKAISKVHSLGKTDVKRYYFVGLGKKESYTTETLRSALGKTFKTLQAAKVQDAAILLDSFVTEKLDAIDVAHIAAEVQGLGTYELQTYKSDKKDRVELEKFTAITAEDAQEIEAALTVGYVHGRATNSARTLVNMPPNVLTATKLAEYAVELAEKYDMDYKVLEKEEMEELGMGALLAVNQGSVEPPKMIALIYKGKEEWTDVIGFVGKGITYDTGGYSLKPREGMVGMKGDMGGAAAVLGAMEIIGELRPEQNVIAVIPSTDNVVSGTAFKPDDVITSMSGKTIEVLNTDAEGRLALADGITYAKKLGANYLIDVATLTGGVIVALGNHTTGAMTNNEELFEQVLEASMETDESIWQLPIFDRDKERVRNSKFADLNNSPGREGHAVMAGTFLGEFAEDTPWVHLDIAGTSESSGAHDLGPAGATGAMVRTLATLVERFGEE</sequence>
<accession>Q632E1</accession>
<dbReference type="EC" id="3.4.11.1" evidence="1"/>
<dbReference type="EC" id="3.4.11.10" evidence="1"/>
<dbReference type="EMBL" id="CP000001">
    <property type="protein sequence ID" value="AAU15622.1"/>
    <property type="molecule type" value="Genomic_DNA"/>
</dbReference>
<dbReference type="RefSeq" id="WP_000487986.1">
    <property type="nucleotide sequence ID" value="NZ_CP009968.1"/>
</dbReference>
<dbReference type="SMR" id="Q632E1"/>
<dbReference type="MEROPS" id="M17.010"/>
<dbReference type="KEGG" id="bcz:BCE33L4653"/>
<dbReference type="PATRIC" id="fig|288681.22.peg.706"/>
<dbReference type="Proteomes" id="UP000002612">
    <property type="component" value="Chromosome"/>
</dbReference>
<dbReference type="GO" id="GO:0005737">
    <property type="term" value="C:cytoplasm"/>
    <property type="evidence" value="ECO:0007669"/>
    <property type="project" value="UniProtKB-SubCell"/>
</dbReference>
<dbReference type="GO" id="GO:0030145">
    <property type="term" value="F:manganese ion binding"/>
    <property type="evidence" value="ECO:0007669"/>
    <property type="project" value="UniProtKB-UniRule"/>
</dbReference>
<dbReference type="GO" id="GO:0070006">
    <property type="term" value="F:metalloaminopeptidase activity"/>
    <property type="evidence" value="ECO:0007669"/>
    <property type="project" value="InterPro"/>
</dbReference>
<dbReference type="GO" id="GO:0006508">
    <property type="term" value="P:proteolysis"/>
    <property type="evidence" value="ECO:0007669"/>
    <property type="project" value="UniProtKB-KW"/>
</dbReference>
<dbReference type="CDD" id="cd00433">
    <property type="entry name" value="Peptidase_M17"/>
    <property type="match status" value="1"/>
</dbReference>
<dbReference type="Gene3D" id="3.40.220.10">
    <property type="entry name" value="Leucine Aminopeptidase, subunit E, domain 1"/>
    <property type="match status" value="1"/>
</dbReference>
<dbReference type="Gene3D" id="3.40.630.10">
    <property type="entry name" value="Zn peptidases"/>
    <property type="match status" value="1"/>
</dbReference>
<dbReference type="HAMAP" id="MF_00181">
    <property type="entry name" value="Cytosol_peptidase_M17"/>
    <property type="match status" value="1"/>
</dbReference>
<dbReference type="InterPro" id="IPR011356">
    <property type="entry name" value="Leucine_aapep/pepB"/>
</dbReference>
<dbReference type="InterPro" id="IPR043472">
    <property type="entry name" value="Macro_dom-like"/>
</dbReference>
<dbReference type="InterPro" id="IPR000819">
    <property type="entry name" value="Peptidase_M17_C"/>
</dbReference>
<dbReference type="InterPro" id="IPR023042">
    <property type="entry name" value="Peptidase_M17_leu_NH2_pept"/>
</dbReference>
<dbReference type="InterPro" id="IPR008283">
    <property type="entry name" value="Peptidase_M17_N"/>
</dbReference>
<dbReference type="NCBIfam" id="NF002073">
    <property type="entry name" value="PRK00913.1-2"/>
    <property type="match status" value="1"/>
</dbReference>
<dbReference type="NCBIfam" id="NF002074">
    <property type="entry name" value="PRK00913.1-4"/>
    <property type="match status" value="1"/>
</dbReference>
<dbReference type="NCBIfam" id="NF002083">
    <property type="entry name" value="PRK00913.3-5"/>
    <property type="match status" value="1"/>
</dbReference>
<dbReference type="PANTHER" id="PTHR11963:SF23">
    <property type="entry name" value="CYTOSOL AMINOPEPTIDASE"/>
    <property type="match status" value="1"/>
</dbReference>
<dbReference type="PANTHER" id="PTHR11963">
    <property type="entry name" value="LEUCINE AMINOPEPTIDASE-RELATED"/>
    <property type="match status" value="1"/>
</dbReference>
<dbReference type="Pfam" id="PF00883">
    <property type="entry name" value="Peptidase_M17"/>
    <property type="match status" value="1"/>
</dbReference>
<dbReference type="Pfam" id="PF02789">
    <property type="entry name" value="Peptidase_M17_N"/>
    <property type="match status" value="1"/>
</dbReference>
<dbReference type="PRINTS" id="PR00481">
    <property type="entry name" value="LAMNOPPTDASE"/>
</dbReference>
<dbReference type="SUPFAM" id="SSF52949">
    <property type="entry name" value="Macro domain-like"/>
    <property type="match status" value="1"/>
</dbReference>
<dbReference type="SUPFAM" id="SSF53187">
    <property type="entry name" value="Zn-dependent exopeptidases"/>
    <property type="match status" value="1"/>
</dbReference>
<dbReference type="PROSITE" id="PS00631">
    <property type="entry name" value="CYTOSOL_AP"/>
    <property type="match status" value="1"/>
</dbReference>
<organism>
    <name type="scientific">Bacillus cereus (strain ZK / E33L)</name>
    <dbReference type="NCBI Taxonomy" id="288681"/>
    <lineage>
        <taxon>Bacteria</taxon>
        <taxon>Bacillati</taxon>
        <taxon>Bacillota</taxon>
        <taxon>Bacilli</taxon>
        <taxon>Bacillales</taxon>
        <taxon>Bacillaceae</taxon>
        <taxon>Bacillus</taxon>
        <taxon>Bacillus cereus group</taxon>
    </lineage>
</organism>
<proteinExistence type="inferred from homology"/>
<gene>
    <name evidence="1" type="primary">pepA</name>
    <name type="ordered locus">BCE33L4653</name>
</gene>
<feature type="chain" id="PRO_1000019883" description="Probable cytosol aminopeptidase">
    <location>
        <begin position="1"/>
        <end position="494"/>
    </location>
</feature>
<feature type="active site" evidence="1">
    <location>
        <position position="272"/>
    </location>
</feature>
<feature type="active site" evidence="1">
    <location>
        <position position="346"/>
    </location>
</feature>
<feature type="binding site" evidence="1">
    <location>
        <position position="260"/>
    </location>
    <ligand>
        <name>Mn(2+)</name>
        <dbReference type="ChEBI" id="CHEBI:29035"/>
        <label>2</label>
    </ligand>
</feature>
<feature type="binding site" evidence="1">
    <location>
        <position position="265"/>
    </location>
    <ligand>
        <name>Mn(2+)</name>
        <dbReference type="ChEBI" id="CHEBI:29035"/>
        <label>1</label>
    </ligand>
</feature>
<feature type="binding site" evidence="1">
    <location>
        <position position="265"/>
    </location>
    <ligand>
        <name>Mn(2+)</name>
        <dbReference type="ChEBI" id="CHEBI:29035"/>
        <label>2</label>
    </ligand>
</feature>
<feature type="binding site" evidence="1">
    <location>
        <position position="283"/>
    </location>
    <ligand>
        <name>Mn(2+)</name>
        <dbReference type="ChEBI" id="CHEBI:29035"/>
        <label>2</label>
    </ligand>
</feature>
<feature type="binding site" evidence="1">
    <location>
        <position position="342"/>
    </location>
    <ligand>
        <name>Mn(2+)</name>
        <dbReference type="ChEBI" id="CHEBI:29035"/>
        <label>1</label>
    </ligand>
</feature>
<feature type="binding site" evidence="1">
    <location>
        <position position="344"/>
    </location>
    <ligand>
        <name>Mn(2+)</name>
        <dbReference type="ChEBI" id="CHEBI:29035"/>
        <label>1</label>
    </ligand>
</feature>
<feature type="binding site" evidence="1">
    <location>
        <position position="344"/>
    </location>
    <ligand>
        <name>Mn(2+)</name>
        <dbReference type="ChEBI" id="CHEBI:29035"/>
        <label>2</label>
    </ligand>
</feature>
<protein>
    <recommendedName>
        <fullName evidence="1">Probable cytosol aminopeptidase</fullName>
        <ecNumber evidence="1">3.4.11.1</ecNumber>
    </recommendedName>
    <alternativeName>
        <fullName evidence="1">Leucine aminopeptidase</fullName>
        <shortName evidence="1">LAP</shortName>
        <ecNumber evidence="1">3.4.11.10</ecNumber>
    </alternativeName>
    <alternativeName>
        <fullName evidence="1">Leucyl aminopeptidase</fullName>
    </alternativeName>
</protein>
<reference key="1">
    <citation type="journal article" date="2006" name="J. Bacteriol.">
        <title>Pathogenomic sequence analysis of Bacillus cereus and Bacillus thuringiensis isolates closely related to Bacillus anthracis.</title>
        <authorList>
            <person name="Han C.S."/>
            <person name="Xie G."/>
            <person name="Challacombe J.F."/>
            <person name="Altherr M.R."/>
            <person name="Bhotika S.S."/>
            <person name="Bruce D."/>
            <person name="Campbell C.S."/>
            <person name="Campbell M.L."/>
            <person name="Chen J."/>
            <person name="Chertkov O."/>
            <person name="Cleland C."/>
            <person name="Dimitrijevic M."/>
            <person name="Doggett N.A."/>
            <person name="Fawcett J.J."/>
            <person name="Glavina T."/>
            <person name="Goodwin L.A."/>
            <person name="Hill K.K."/>
            <person name="Hitchcock P."/>
            <person name="Jackson P.J."/>
            <person name="Keim P."/>
            <person name="Kewalramani A.R."/>
            <person name="Longmire J."/>
            <person name="Lucas S."/>
            <person name="Malfatti S."/>
            <person name="McMurry K."/>
            <person name="Meincke L.J."/>
            <person name="Misra M."/>
            <person name="Moseman B.L."/>
            <person name="Mundt M."/>
            <person name="Munk A.C."/>
            <person name="Okinaka R.T."/>
            <person name="Parson-Quintana B."/>
            <person name="Reilly L.P."/>
            <person name="Richardson P."/>
            <person name="Robinson D.L."/>
            <person name="Rubin E."/>
            <person name="Saunders E."/>
            <person name="Tapia R."/>
            <person name="Tesmer J.G."/>
            <person name="Thayer N."/>
            <person name="Thompson L.S."/>
            <person name="Tice H."/>
            <person name="Ticknor L.O."/>
            <person name="Wills P.L."/>
            <person name="Brettin T.S."/>
            <person name="Gilna P."/>
        </authorList>
    </citation>
    <scope>NUCLEOTIDE SEQUENCE [LARGE SCALE GENOMIC DNA]</scope>
    <source>
        <strain>ZK / E33L</strain>
    </source>
</reference>
<comment type="function">
    <text evidence="1">Presumably involved in the processing and regular turnover of intracellular proteins. Catalyzes the removal of unsubstituted N-terminal amino acids from various peptides.</text>
</comment>
<comment type="catalytic activity">
    <reaction evidence="1">
        <text>Release of an N-terminal amino acid, Xaa-|-Yaa-, in which Xaa is preferably Leu, but may be other amino acids including Pro although not Arg or Lys, and Yaa may be Pro. Amino acid amides and methyl esters are also readily hydrolyzed, but rates on arylamides are exceedingly low.</text>
        <dbReference type="EC" id="3.4.11.1"/>
    </reaction>
</comment>
<comment type="catalytic activity">
    <reaction evidence="1">
        <text>Release of an N-terminal amino acid, preferentially leucine, but not glutamic or aspartic acids.</text>
        <dbReference type="EC" id="3.4.11.10"/>
    </reaction>
</comment>
<comment type="cofactor">
    <cofactor evidence="1">
        <name>Mn(2+)</name>
        <dbReference type="ChEBI" id="CHEBI:29035"/>
    </cofactor>
    <text evidence="1">Binds 2 manganese ions per subunit.</text>
</comment>
<comment type="subcellular location">
    <subcellularLocation>
        <location evidence="1">Cytoplasm</location>
    </subcellularLocation>
</comment>
<comment type="similarity">
    <text evidence="1">Belongs to the peptidase M17 family.</text>
</comment>
<evidence type="ECO:0000255" key="1">
    <source>
        <dbReference type="HAMAP-Rule" id="MF_00181"/>
    </source>
</evidence>